<organism>
    <name type="scientific">Thermococcus kodakarensis (strain ATCC BAA-918 / JCM 12380 / KOD1)</name>
    <name type="common">Pyrococcus kodakaraensis (strain KOD1)</name>
    <dbReference type="NCBI Taxonomy" id="69014"/>
    <lineage>
        <taxon>Archaea</taxon>
        <taxon>Methanobacteriati</taxon>
        <taxon>Methanobacteriota</taxon>
        <taxon>Thermococci</taxon>
        <taxon>Thermococcales</taxon>
        <taxon>Thermococcaceae</taxon>
        <taxon>Thermococcus</taxon>
    </lineage>
</organism>
<comment type="catalytic activity">
    <reaction evidence="2">
        <text>5-phospho-beta-D-ribosylamine + glycine + ATP = N(1)-(5-phospho-beta-D-ribosyl)glycinamide + ADP + phosphate + H(+)</text>
        <dbReference type="Rhea" id="RHEA:17453"/>
        <dbReference type="ChEBI" id="CHEBI:15378"/>
        <dbReference type="ChEBI" id="CHEBI:30616"/>
        <dbReference type="ChEBI" id="CHEBI:43474"/>
        <dbReference type="ChEBI" id="CHEBI:57305"/>
        <dbReference type="ChEBI" id="CHEBI:58681"/>
        <dbReference type="ChEBI" id="CHEBI:143788"/>
        <dbReference type="ChEBI" id="CHEBI:456216"/>
        <dbReference type="EC" id="6.3.4.13"/>
    </reaction>
</comment>
<comment type="cofactor">
    <cofactor evidence="1">
        <name>Mg(2+)</name>
        <dbReference type="ChEBI" id="CHEBI:18420"/>
    </cofactor>
    <cofactor evidence="1">
        <name>Mn(2+)</name>
        <dbReference type="ChEBI" id="CHEBI:29035"/>
    </cofactor>
    <text evidence="1">Binds 2 magnesium or manganese ions per subunit.</text>
</comment>
<comment type="pathway">
    <text evidence="2">Purine metabolism; IMP biosynthesis via de novo pathway; N(1)-(5-phospho-D-ribosyl)glycinamide from 5-phospho-alpha-D-ribose 1-diphosphate: step 2/2.</text>
</comment>
<comment type="similarity">
    <text evidence="2">Belongs to the GARS family.</text>
</comment>
<feature type="chain" id="PRO_0000151517" description="Phosphoribosylamine--glycine ligase">
    <location>
        <begin position="1"/>
        <end position="431"/>
    </location>
</feature>
<feature type="domain" description="ATP-grasp" evidence="2">
    <location>
        <begin position="107"/>
        <end position="315"/>
    </location>
</feature>
<feature type="binding site" evidence="2">
    <location>
        <begin position="134"/>
        <end position="193"/>
    </location>
    <ligand>
        <name>ATP</name>
        <dbReference type="ChEBI" id="CHEBI:30616"/>
    </ligand>
</feature>
<feature type="binding site" evidence="2">
    <location>
        <position position="273"/>
    </location>
    <ligand>
        <name>Mg(2+)</name>
        <dbReference type="ChEBI" id="CHEBI:18420"/>
        <label>1</label>
    </ligand>
</feature>
<feature type="binding site" evidence="2">
    <location>
        <position position="273"/>
    </location>
    <ligand>
        <name>Mn(2+)</name>
        <dbReference type="ChEBI" id="CHEBI:29035"/>
        <label>1</label>
    </ligand>
</feature>
<feature type="binding site" evidence="2">
    <location>
        <position position="285"/>
    </location>
    <ligand>
        <name>Mg(2+)</name>
        <dbReference type="ChEBI" id="CHEBI:18420"/>
        <label>1</label>
    </ligand>
</feature>
<feature type="binding site" evidence="2">
    <location>
        <position position="285"/>
    </location>
    <ligand>
        <name>Mg(2+)</name>
        <dbReference type="ChEBI" id="CHEBI:18420"/>
        <label>2</label>
    </ligand>
</feature>
<feature type="binding site" evidence="2">
    <location>
        <position position="285"/>
    </location>
    <ligand>
        <name>Mn(2+)</name>
        <dbReference type="ChEBI" id="CHEBI:29035"/>
        <label>1</label>
    </ligand>
</feature>
<feature type="binding site" evidence="2">
    <location>
        <position position="285"/>
    </location>
    <ligand>
        <name>Mn(2+)</name>
        <dbReference type="ChEBI" id="CHEBI:29035"/>
        <label>2</label>
    </ligand>
</feature>
<feature type="binding site" evidence="2">
    <location>
        <position position="287"/>
    </location>
    <ligand>
        <name>Mg(2+)</name>
        <dbReference type="ChEBI" id="CHEBI:18420"/>
        <label>2</label>
    </ligand>
</feature>
<feature type="binding site" evidence="2">
    <location>
        <position position="287"/>
    </location>
    <ligand>
        <name>Mn(2+)</name>
        <dbReference type="ChEBI" id="CHEBI:29035"/>
        <label>2</label>
    </ligand>
</feature>
<accession>Q5JFP1</accession>
<dbReference type="EC" id="6.3.4.13" evidence="2"/>
<dbReference type="EMBL" id="AP006878">
    <property type="protein sequence ID" value="BAD84393.1"/>
    <property type="molecule type" value="Genomic_DNA"/>
</dbReference>
<dbReference type="RefSeq" id="WP_011249159.1">
    <property type="nucleotide sequence ID" value="NC_006624.1"/>
</dbReference>
<dbReference type="SMR" id="Q5JFP1"/>
<dbReference type="FunCoup" id="Q5JFP1">
    <property type="interactions" value="85"/>
</dbReference>
<dbReference type="STRING" id="69014.TK0204"/>
<dbReference type="EnsemblBacteria" id="BAD84393">
    <property type="protein sequence ID" value="BAD84393"/>
    <property type="gene ID" value="TK0204"/>
</dbReference>
<dbReference type="GeneID" id="78446708"/>
<dbReference type="KEGG" id="tko:TK0204"/>
<dbReference type="PATRIC" id="fig|69014.16.peg.203"/>
<dbReference type="eggNOG" id="arCOG04415">
    <property type="taxonomic scope" value="Archaea"/>
</dbReference>
<dbReference type="HOGENOM" id="CLU_027420_3_0_2"/>
<dbReference type="InParanoid" id="Q5JFP1"/>
<dbReference type="OrthoDB" id="146558at2157"/>
<dbReference type="PhylomeDB" id="Q5JFP1"/>
<dbReference type="UniPathway" id="UPA00074">
    <property type="reaction ID" value="UER00125"/>
</dbReference>
<dbReference type="Proteomes" id="UP000000536">
    <property type="component" value="Chromosome"/>
</dbReference>
<dbReference type="GO" id="GO:0005524">
    <property type="term" value="F:ATP binding"/>
    <property type="evidence" value="ECO:0007669"/>
    <property type="project" value="UniProtKB-KW"/>
</dbReference>
<dbReference type="GO" id="GO:0046872">
    <property type="term" value="F:metal ion binding"/>
    <property type="evidence" value="ECO:0007669"/>
    <property type="project" value="UniProtKB-KW"/>
</dbReference>
<dbReference type="GO" id="GO:0004637">
    <property type="term" value="F:phosphoribosylamine-glycine ligase activity"/>
    <property type="evidence" value="ECO:0007669"/>
    <property type="project" value="UniProtKB-UniRule"/>
</dbReference>
<dbReference type="GO" id="GO:0006189">
    <property type="term" value="P:'de novo' IMP biosynthetic process"/>
    <property type="evidence" value="ECO:0007669"/>
    <property type="project" value="UniProtKB-UniRule"/>
</dbReference>
<dbReference type="GO" id="GO:0009113">
    <property type="term" value="P:purine nucleobase biosynthetic process"/>
    <property type="evidence" value="ECO:0007669"/>
    <property type="project" value="InterPro"/>
</dbReference>
<dbReference type="Gene3D" id="3.40.50.20">
    <property type="match status" value="1"/>
</dbReference>
<dbReference type="Gene3D" id="3.30.1490.20">
    <property type="entry name" value="ATP-grasp fold, A domain"/>
    <property type="match status" value="1"/>
</dbReference>
<dbReference type="Gene3D" id="3.30.470.20">
    <property type="entry name" value="ATP-grasp fold, B domain"/>
    <property type="match status" value="1"/>
</dbReference>
<dbReference type="Gene3D" id="3.90.600.10">
    <property type="entry name" value="Phosphoribosylglycinamide synthetase, C-terminal domain"/>
    <property type="match status" value="1"/>
</dbReference>
<dbReference type="HAMAP" id="MF_00138">
    <property type="entry name" value="GARS"/>
    <property type="match status" value="1"/>
</dbReference>
<dbReference type="InterPro" id="IPR011761">
    <property type="entry name" value="ATP-grasp"/>
</dbReference>
<dbReference type="InterPro" id="IPR013815">
    <property type="entry name" value="ATP_grasp_subdomain_1"/>
</dbReference>
<dbReference type="InterPro" id="IPR016185">
    <property type="entry name" value="PreATP-grasp_dom_sf"/>
</dbReference>
<dbReference type="InterPro" id="IPR020561">
    <property type="entry name" value="PRibGlycinamid_synth_ATP-grasp"/>
</dbReference>
<dbReference type="InterPro" id="IPR000115">
    <property type="entry name" value="PRibGlycinamide_synth"/>
</dbReference>
<dbReference type="InterPro" id="IPR020560">
    <property type="entry name" value="PRibGlycinamide_synth_C-dom"/>
</dbReference>
<dbReference type="InterPro" id="IPR037123">
    <property type="entry name" value="PRibGlycinamide_synth_C_sf"/>
</dbReference>
<dbReference type="InterPro" id="IPR020559">
    <property type="entry name" value="PRibGlycinamide_synth_CS"/>
</dbReference>
<dbReference type="InterPro" id="IPR020562">
    <property type="entry name" value="PRibGlycinamide_synth_N"/>
</dbReference>
<dbReference type="InterPro" id="IPR011054">
    <property type="entry name" value="Rudment_hybrid_motif"/>
</dbReference>
<dbReference type="NCBIfam" id="TIGR00877">
    <property type="entry name" value="purD"/>
    <property type="match status" value="1"/>
</dbReference>
<dbReference type="PANTHER" id="PTHR43472">
    <property type="entry name" value="PHOSPHORIBOSYLAMINE--GLYCINE LIGASE"/>
    <property type="match status" value="1"/>
</dbReference>
<dbReference type="PANTHER" id="PTHR43472:SF1">
    <property type="entry name" value="PHOSPHORIBOSYLAMINE--GLYCINE LIGASE, CHLOROPLASTIC"/>
    <property type="match status" value="1"/>
</dbReference>
<dbReference type="Pfam" id="PF01071">
    <property type="entry name" value="GARS_A"/>
    <property type="match status" value="1"/>
</dbReference>
<dbReference type="Pfam" id="PF02843">
    <property type="entry name" value="GARS_C"/>
    <property type="match status" value="1"/>
</dbReference>
<dbReference type="Pfam" id="PF02844">
    <property type="entry name" value="GARS_N"/>
    <property type="match status" value="1"/>
</dbReference>
<dbReference type="SMART" id="SM01209">
    <property type="entry name" value="GARS_A"/>
    <property type="match status" value="1"/>
</dbReference>
<dbReference type="SMART" id="SM01210">
    <property type="entry name" value="GARS_C"/>
    <property type="match status" value="1"/>
</dbReference>
<dbReference type="SUPFAM" id="SSF56059">
    <property type="entry name" value="Glutathione synthetase ATP-binding domain-like"/>
    <property type="match status" value="1"/>
</dbReference>
<dbReference type="SUPFAM" id="SSF52440">
    <property type="entry name" value="PreATP-grasp domain"/>
    <property type="match status" value="1"/>
</dbReference>
<dbReference type="SUPFAM" id="SSF51246">
    <property type="entry name" value="Rudiment single hybrid motif"/>
    <property type="match status" value="1"/>
</dbReference>
<dbReference type="PROSITE" id="PS50975">
    <property type="entry name" value="ATP_GRASP"/>
    <property type="match status" value="1"/>
</dbReference>
<dbReference type="PROSITE" id="PS00184">
    <property type="entry name" value="GARS"/>
    <property type="match status" value="1"/>
</dbReference>
<gene>
    <name evidence="2" type="primary">purD</name>
    <name type="ordered locus">TK0204</name>
</gene>
<reference key="1">
    <citation type="journal article" date="2005" name="Genome Res.">
        <title>Complete genome sequence of the hyperthermophilic archaeon Thermococcus kodakaraensis KOD1 and comparison with Pyrococcus genomes.</title>
        <authorList>
            <person name="Fukui T."/>
            <person name="Atomi H."/>
            <person name="Kanai T."/>
            <person name="Matsumi R."/>
            <person name="Fujiwara S."/>
            <person name="Imanaka T."/>
        </authorList>
    </citation>
    <scope>NUCLEOTIDE SEQUENCE [LARGE SCALE GENOMIC DNA]</scope>
    <source>
        <strain>ATCC BAA-918 / JCM 12380 / KOD1</strain>
    </source>
</reference>
<proteinExistence type="inferred from homology"/>
<sequence>MRVLLVGAGGRENAIAEVLARDAELYVVAGHKNPGIARLAKDYALAKETDVPRVLDFALKWGVDMAFIGPEAPLEKGIVNVLEENGVPTVGPTREAAMLETNKAFARWLMEEYKIPGRKLFKVFDDVSEMKSWIDDFGRPVVVKPLGLTGGKGVKVVGYQLKDNEEAKAYAEELIKRDGKVLIEERTDGVEFTFQVFTDGKRVVPMPLAQDYPHAYEGDVGPITGGMGSYSCEDHRLPFITKEDYEKALETLKATVEAMRKNGTPYKGILYGQFMLAKDEPKIIEFNARFGDPEAMNVLPILKRSLVEIGEEIVDGNLKGAEFERKATVVKYIAPKGYPTNPVRGIKLHVDEAKIREEGARVYYASLDENFRMLGSRALAVVGIADSLEEAERIASAGIRHVRGEIFYRKDVGTRESIARRIELVRAMRGE</sequence>
<name>PUR2_THEKO</name>
<protein>
    <recommendedName>
        <fullName evidence="2">Phosphoribosylamine--glycine ligase</fullName>
        <ecNumber evidence="2">6.3.4.13</ecNumber>
    </recommendedName>
    <alternativeName>
        <fullName evidence="2">GARS</fullName>
    </alternativeName>
    <alternativeName>
        <fullName evidence="2">Glycinamide ribonucleotide synthetase</fullName>
    </alternativeName>
    <alternativeName>
        <fullName evidence="2">Phosphoribosylglycinamide synthetase</fullName>
    </alternativeName>
</protein>
<evidence type="ECO:0000250" key="1"/>
<evidence type="ECO:0000255" key="2">
    <source>
        <dbReference type="HAMAP-Rule" id="MF_00138"/>
    </source>
</evidence>
<keyword id="KW-0067">ATP-binding</keyword>
<keyword id="KW-0436">Ligase</keyword>
<keyword id="KW-0460">Magnesium</keyword>
<keyword id="KW-0464">Manganese</keyword>
<keyword id="KW-0479">Metal-binding</keyword>
<keyword id="KW-0547">Nucleotide-binding</keyword>
<keyword id="KW-0658">Purine biosynthesis</keyword>
<keyword id="KW-1185">Reference proteome</keyword>